<evidence type="ECO:0000255" key="1">
    <source>
        <dbReference type="HAMAP-Rule" id="MF_01389"/>
    </source>
</evidence>
<comment type="function">
    <text evidence="1">Facilitates the functional incorporation of the urease nickel metallocenter. This process requires GTP hydrolysis, probably effectuated by UreG.</text>
</comment>
<comment type="subunit">
    <text evidence="1">Homodimer. UreD, UreF and UreG form a complex that acts as a GTP-hydrolysis-dependent molecular chaperone, activating the urease apoprotein by helping to assemble the nickel containing metallocenter of UreC. The UreE protein probably delivers the nickel.</text>
</comment>
<comment type="subcellular location">
    <subcellularLocation>
        <location evidence="1">Cytoplasm</location>
    </subcellularLocation>
</comment>
<comment type="similarity">
    <text evidence="1">Belongs to the SIMIBI class G3E GTPase family. UreG subfamily.</text>
</comment>
<gene>
    <name evidence="1" type="primary">ureG</name>
    <name type="ordered locus">tlr0057</name>
</gene>
<name>UREG_THEVB</name>
<organism>
    <name type="scientific">Thermosynechococcus vestitus (strain NIES-2133 / IAM M-273 / BP-1)</name>
    <dbReference type="NCBI Taxonomy" id="197221"/>
    <lineage>
        <taxon>Bacteria</taxon>
        <taxon>Bacillati</taxon>
        <taxon>Cyanobacteriota</taxon>
        <taxon>Cyanophyceae</taxon>
        <taxon>Acaryochloridales</taxon>
        <taxon>Thermosynechococcaceae</taxon>
        <taxon>Thermosynechococcus</taxon>
    </lineage>
</organism>
<protein>
    <recommendedName>
        <fullName evidence="1">Urease accessory protein UreG</fullName>
    </recommendedName>
</protein>
<keyword id="KW-0143">Chaperone</keyword>
<keyword id="KW-0963">Cytoplasm</keyword>
<keyword id="KW-0342">GTP-binding</keyword>
<keyword id="KW-0996">Nickel insertion</keyword>
<keyword id="KW-0547">Nucleotide-binding</keyword>
<keyword id="KW-1185">Reference proteome</keyword>
<sequence>METVLRVGVAGPVGSGKTALVDALCKALRDRYRLAVVTNDIYTQEDAQFLVRSQALPPERILGVETGGCPHTAIREDASLNLAAIQQLETAFRPLDLIFVESGGDNLAATFSPELVDLTIYVIDVAAGDKIPRKGGPGITKSDLLVINKIDLAPYVGADLEVMKRDTLKMRGDRPYVMTNLKTGLGLDQVIAFLTVHLAA</sequence>
<feature type="chain" id="PRO_0000347453" description="Urease accessory protein UreG">
    <location>
        <begin position="1"/>
        <end position="200"/>
    </location>
</feature>
<feature type="binding site" evidence="1">
    <location>
        <begin position="11"/>
        <end position="18"/>
    </location>
    <ligand>
        <name>GTP</name>
        <dbReference type="ChEBI" id="CHEBI:37565"/>
    </ligand>
</feature>
<dbReference type="EMBL" id="BA000039">
    <property type="protein sequence ID" value="BAC07610.1"/>
    <property type="molecule type" value="Genomic_DNA"/>
</dbReference>
<dbReference type="RefSeq" id="NP_680848.1">
    <property type="nucleotide sequence ID" value="NC_004113.1"/>
</dbReference>
<dbReference type="RefSeq" id="WP_011055912.1">
    <property type="nucleotide sequence ID" value="NC_004113.1"/>
</dbReference>
<dbReference type="SMR" id="Q8DMQ4"/>
<dbReference type="STRING" id="197221.gene:10746635"/>
<dbReference type="EnsemblBacteria" id="BAC07610">
    <property type="protein sequence ID" value="BAC07610"/>
    <property type="gene ID" value="BAC07610"/>
</dbReference>
<dbReference type="KEGG" id="tel:tlr0057"/>
<dbReference type="PATRIC" id="fig|197221.4.peg.58"/>
<dbReference type="eggNOG" id="COG0378">
    <property type="taxonomic scope" value="Bacteria"/>
</dbReference>
<dbReference type="Proteomes" id="UP000000440">
    <property type="component" value="Chromosome"/>
</dbReference>
<dbReference type="GO" id="GO:0005737">
    <property type="term" value="C:cytoplasm"/>
    <property type="evidence" value="ECO:0007669"/>
    <property type="project" value="UniProtKB-SubCell"/>
</dbReference>
<dbReference type="GO" id="GO:0005525">
    <property type="term" value="F:GTP binding"/>
    <property type="evidence" value="ECO:0007669"/>
    <property type="project" value="UniProtKB-KW"/>
</dbReference>
<dbReference type="GO" id="GO:0003924">
    <property type="term" value="F:GTPase activity"/>
    <property type="evidence" value="ECO:0007669"/>
    <property type="project" value="InterPro"/>
</dbReference>
<dbReference type="GO" id="GO:0016151">
    <property type="term" value="F:nickel cation binding"/>
    <property type="evidence" value="ECO:0007669"/>
    <property type="project" value="UniProtKB-UniRule"/>
</dbReference>
<dbReference type="GO" id="GO:0043419">
    <property type="term" value="P:urea catabolic process"/>
    <property type="evidence" value="ECO:0007669"/>
    <property type="project" value="InterPro"/>
</dbReference>
<dbReference type="CDD" id="cd05540">
    <property type="entry name" value="UreG"/>
    <property type="match status" value="1"/>
</dbReference>
<dbReference type="FunFam" id="3.40.50.300:FF:000208">
    <property type="entry name" value="Urease accessory protein UreG"/>
    <property type="match status" value="1"/>
</dbReference>
<dbReference type="Gene3D" id="3.40.50.300">
    <property type="entry name" value="P-loop containing nucleotide triphosphate hydrolases"/>
    <property type="match status" value="1"/>
</dbReference>
<dbReference type="HAMAP" id="MF_01389">
    <property type="entry name" value="UreG"/>
    <property type="match status" value="1"/>
</dbReference>
<dbReference type="InterPro" id="IPR003495">
    <property type="entry name" value="CobW/HypB/UreG_nucleotide-bd"/>
</dbReference>
<dbReference type="InterPro" id="IPR027417">
    <property type="entry name" value="P-loop_NTPase"/>
</dbReference>
<dbReference type="InterPro" id="IPR004400">
    <property type="entry name" value="UreG"/>
</dbReference>
<dbReference type="NCBIfam" id="TIGR00101">
    <property type="entry name" value="ureG"/>
    <property type="match status" value="1"/>
</dbReference>
<dbReference type="PANTHER" id="PTHR31715">
    <property type="entry name" value="UREASE ACCESSORY PROTEIN G"/>
    <property type="match status" value="1"/>
</dbReference>
<dbReference type="PANTHER" id="PTHR31715:SF0">
    <property type="entry name" value="UREASE ACCESSORY PROTEIN G"/>
    <property type="match status" value="1"/>
</dbReference>
<dbReference type="Pfam" id="PF02492">
    <property type="entry name" value="cobW"/>
    <property type="match status" value="1"/>
</dbReference>
<dbReference type="PIRSF" id="PIRSF005624">
    <property type="entry name" value="Ni-bind_GTPase"/>
    <property type="match status" value="1"/>
</dbReference>
<dbReference type="SUPFAM" id="SSF52540">
    <property type="entry name" value="P-loop containing nucleoside triphosphate hydrolases"/>
    <property type="match status" value="1"/>
</dbReference>
<accession>Q8DMQ4</accession>
<proteinExistence type="inferred from homology"/>
<reference key="1">
    <citation type="journal article" date="2002" name="DNA Res.">
        <title>Complete genome structure of the thermophilic cyanobacterium Thermosynechococcus elongatus BP-1.</title>
        <authorList>
            <person name="Nakamura Y."/>
            <person name="Kaneko T."/>
            <person name="Sato S."/>
            <person name="Ikeuchi M."/>
            <person name="Katoh H."/>
            <person name="Sasamoto S."/>
            <person name="Watanabe A."/>
            <person name="Iriguchi M."/>
            <person name="Kawashima K."/>
            <person name="Kimura T."/>
            <person name="Kishida Y."/>
            <person name="Kiyokawa C."/>
            <person name="Kohara M."/>
            <person name="Matsumoto M."/>
            <person name="Matsuno A."/>
            <person name="Nakazaki N."/>
            <person name="Shimpo S."/>
            <person name="Sugimoto M."/>
            <person name="Takeuchi C."/>
            <person name="Yamada M."/>
            <person name="Tabata S."/>
        </authorList>
    </citation>
    <scope>NUCLEOTIDE SEQUENCE [LARGE SCALE GENOMIC DNA]</scope>
    <source>
        <strain>NIES-2133 / IAM M-273 / BP-1</strain>
    </source>
</reference>